<name>FURIN_HUMAN</name>
<dbReference type="EC" id="3.4.21.75" evidence="7 9 11 14 17 24 25 29"/>
<dbReference type="EMBL" id="X17094">
    <property type="protein sequence ID" value="CAA34948.1"/>
    <property type="molecule type" value="mRNA"/>
</dbReference>
<dbReference type="EMBL" id="BC012181">
    <property type="protein sequence ID" value="AAH12181.1"/>
    <property type="molecule type" value="mRNA"/>
</dbReference>
<dbReference type="EMBL" id="X15723">
    <property type="protein sequence ID" value="CAA33745.1"/>
    <property type="molecule type" value="Genomic_DNA"/>
</dbReference>
<dbReference type="EMBL" id="X04329">
    <property type="protein sequence ID" value="CAA27860.1"/>
    <property type="molecule type" value="Genomic_DNA"/>
</dbReference>
<dbReference type="CCDS" id="CCDS10364.1"/>
<dbReference type="PIR" id="A39552">
    <property type="entry name" value="KXHUF"/>
</dbReference>
<dbReference type="RefSeq" id="NP_001276752.1">
    <property type="nucleotide sequence ID" value="NM_001289823.2"/>
</dbReference>
<dbReference type="RefSeq" id="NP_001276753.1">
    <property type="nucleotide sequence ID" value="NM_001289824.2"/>
</dbReference>
<dbReference type="RefSeq" id="NP_001369548.1">
    <property type="nucleotide sequence ID" value="NM_001382619.1"/>
</dbReference>
<dbReference type="RefSeq" id="NP_001369549.1">
    <property type="nucleotide sequence ID" value="NM_001382620.1"/>
</dbReference>
<dbReference type="RefSeq" id="NP_001369550.1">
    <property type="nucleotide sequence ID" value="NM_001382621.1"/>
</dbReference>
<dbReference type="RefSeq" id="NP_002560.1">
    <property type="nucleotide sequence ID" value="NM_002569.4"/>
</dbReference>
<dbReference type="PDB" id="4OMC">
    <property type="method" value="X-ray"/>
    <property type="resolution" value="2.30 A"/>
    <property type="chains" value="A/B/C/D/E/F=108-574"/>
</dbReference>
<dbReference type="PDB" id="4OMD">
    <property type="method" value="X-ray"/>
    <property type="resolution" value="2.70 A"/>
    <property type="chains" value="A/B/C/D/E/F=108-574"/>
</dbReference>
<dbReference type="PDB" id="4RYD">
    <property type="method" value="X-ray"/>
    <property type="resolution" value="2.15 A"/>
    <property type="chains" value="A/B/C/D/E/F=108-574"/>
</dbReference>
<dbReference type="PDB" id="4Z2A">
    <property type="method" value="X-ray"/>
    <property type="resolution" value="1.89 A"/>
    <property type="chains" value="A=110-574"/>
</dbReference>
<dbReference type="PDB" id="5JMO">
    <property type="method" value="X-ray"/>
    <property type="resolution" value="2.00 A"/>
    <property type="chains" value="A/B=108-574"/>
</dbReference>
<dbReference type="PDB" id="5JXG">
    <property type="method" value="X-ray"/>
    <property type="resolution" value="1.80 A"/>
    <property type="chains" value="A=108-574"/>
</dbReference>
<dbReference type="PDB" id="5JXH">
    <property type="method" value="X-ray"/>
    <property type="resolution" value="2.00 A"/>
    <property type="chains" value="A=108-574"/>
</dbReference>
<dbReference type="PDB" id="5JXI">
    <property type="method" value="X-ray"/>
    <property type="resolution" value="2.00 A"/>
    <property type="chains" value="A=108-574"/>
</dbReference>
<dbReference type="PDB" id="5JXJ">
    <property type="method" value="X-ray"/>
    <property type="resolution" value="2.00 A"/>
    <property type="chains" value="A=108-574"/>
</dbReference>
<dbReference type="PDB" id="5MIM">
    <property type="method" value="X-ray"/>
    <property type="resolution" value="1.90 A"/>
    <property type="chains" value="A=108-574"/>
</dbReference>
<dbReference type="PDB" id="6A8Y">
    <property type="method" value="NMR"/>
    <property type="chains" value="A=64-89"/>
</dbReference>
<dbReference type="PDB" id="6EQV">
    <property type="method" value="X-ray"/>
    <property type="resolution" value="1.90 A"/>
    <property type="chains" value="A=108-574"/>
</dbReference>
<dbReference type="PDB" id="6EQW">
    <property type="method" value="X-ray"/>
    <property type="resolution" value="1.99 A"/>
    <property type="chains" value="A=108-574"/>
</dbReference>
<dbReference type="PDB" id="6EQX">
    <property type="method" value="X-ray"/>
    <property type="resolution" value="1.99 A"/>
    <property type="chains" value="A=108-567"/>
</dbReference>
<dbReference type="PDB" id="6HLB">
    <property type="method" value="X-ray"/>
    <property type="resolution" value="2.00 A"/>
    <property type="chains" value="A=108-574"/>
</dbReference>
<dbReference type="PDB" id="6HLD">
    <property type="method" value="X-ray"/>
    <property type="resolution" value="2.10 A"/>
    <property type="chains" value="A=108-574"/>
</dbReference>
<dbReference type="PDB" id="6HLE">
    <property type="method" value="X-ray"/>
    <property type="resolution" value="1.99 A"/>
    <property type="chains" value="A=108-574"/>
</dbReference>
<dbReference type="PDB" id="6HZA">
    <property type="method" value="X-ray"/>
    <property type="resolution" value="1.90 A"/>
    <property type="chains" value="A=108-574"/>
</dbReference>
<dbReference type="PDB" id="6HZB">
    <property type="method" value="X-ray"/>
    <property type="resolution" value="1.90 A"/>
    <property type="chains" value="A=108-574"/>
</dbReference>
<dbReference type="PDB" id="6HZC">
    <property type="method" value="X-ray"/>
    <property type="resolution" value="1.90 A"/>
    <property type="chains" value="A=108-574"/>
</dbReference>
<dbReference type="PDB" id="6HZD">
    <property type="method" value="X-ray"/>
    <property type="resolution" value="1.90 A"/>
    <property type="chains" value="A=108-574"/>
</dbReference>
<dbReference type="PDB" id="6YD2">
    <property type="method" value="X-ray"/>
    <property type="resolution" value="1.80 A"/>
    <property type="chains" value="A=108-574"/>
</dbReference>
<dbReference type="PDB" id="6YD3">
    <property type="method" value="X-ray"/>
    <property type="resolution" value="2.00 A"/>
    <property type="chains" value="A=108-574"/>
</dbReference>
<dbReference type="PDB" id="6YD4">
    <property type="method" value="X-ray"/>
    <property type="resolution" value="1.70 A"/>
    <property type="chains" value="A=108-574"/>
</dbReference>
<dbReference type="PDB" id="6YD7">
    <property type="method" value="X-ray"/>
    <property type="resolution" value="1.80 A"/>
    <property type="chains" value="A=108-574"/>
</dbReference>
<dbReference type="PDB" id="7LCU">
    <property type="method" value="X-ray"/>
    <property type="resolution" value="1.24 A"/>
    <property type="chains" value="A=108-574"/>
</dbReference>
<dbReference type="PDB" id="7O1U">
    <property type="method" value="X-ray"/>
    <property type="resolution" value="1.70 A"/>
    <property type="chains" value="A=108-574"/>
</dbReference>
<dbReference type="PDB" id="7O1W">
    <property type="method" value="X-ray"/>
    <property type="resolution" value="1.80 A"/>
    <property type="chains" value="A=108-574"/>
</dbReference>
<dbReference type="PDB" id="7O1Y">
    <property type="method" value="X-ray"/>
    <property type="resolution" value="1.70 A"/>
    <property type="chains" value="A=108-574"/>
</dbReference>
<dbReference type="PDB" id="7O20">
    <property type="method" value="X-ray"/>
    <property type="resolution" value="1.80 A"/>
    <property type="chains" value="A=108-574"/>
</dbReference>
<dbReference type="PDB" id="7O22">
    <property type="method" value="X-ray"/>
    <property type="resolution" value="1.80 A"/>
    <property type="chains" value="A=108-574"/>
</dbReference>
<dbReference type="PDB" id="7QXY">
    <property type="method" value="X-ray"/>
    <property type="resolution" value="1.48 A"/>
    <property type="chains" value="A=108-574"/>
</dbReference>
<dbReference type="PDB" id="7QXZ">
    <property type="method" value="X-ray"/>
    <property type="resolution" value="1.80 A"/>
    <property type="chains" value="A=108-574"/>
</dbReference>
<dbReference type="PDB" id="7QY0">
    <property type="method" value="X-ray"/>
    <property type="resolution" value="1.54 A"/>
    <property type="chains" value="A=108-574"/>
</dbReference>
<dbReference type="PDB" id="7QY1">
    <property type="method" value="X-ray"/>
    <property type="resolution" value="1.45 A"/>
    <property type="chains" value="A=108-574"/>
</dbReference>
<dbReference type="PDB" id="7QY2">
    <property type="method" value="X-ray"/>
    <property type="resolution" value="1.55 A"/>
    <property type="chains" value="A=108-574"/>
</dbReference>
<dbReference type="PDB" id="8B4V">
    <property type="method" value="X-ray"/>
    <property type="resolution" value="1.60 A"/>
    <property type="chains" value="A=108-574"/>
</dbReference>
<dbReference type="PDB" id="8B4W">
    <property type="method" value="X-ray"/>
    <property type="resolution" value="1.60 A"/>
    <property type="chains" value="A=108-574"/>
</dbReference>
<dbReference type="PDB" id="8B4X">
    <property type="method" value="X-ray"/>
    <property type="resolution" value="1.60 A"/>
    <property type="chains" value="A=108-574"/>
</dbReference>
<dbReference type="PDB" id="8OYH">
    <property type="method" value="X-ray"/>
    <property type="resolution" value="1.80 A"/>
    <property type="chains" value="A=108-574"/>
</dbReference>
<dbReference type="PDBsum" id="4OMC"/>
<dbReference type="PDBsum" id="4OMD"/>
<dbReference type="PDBsum" id="4RYD"/>
<dbReference type="PDBsum" id="4Z2A"/>
<dbReference type="PDBsum" id="5JMO"/>
<dbReference type="PDBsum" id="5JXG"/>
<dbReference type="PDBsum" id="5JXH"/>
<dbReference type="PDBsum" id="5JXI"/>
<dbReference type="PDBsum" id="5JXJ"/>
<dbReference type="PDBsum" id="5MIM"/>
<dbReference type="PDBsum" id="6A8Y"/>
<dbReference type="PDBsum" id="6EQV"/>
<dbReference type="PDBsum" id="6EQW"/>
<dbReference type="PDBsum" id="6EQX"/>
<dbReference type="PDBsum" id="6HLB"/>
<dbReference type="PDBsum" id="6HLD"/>
<dbReference type="PDBsum" id="6HLE"/>
<dbReference type="PDBsum" id="6HZA"/>
<dbReference type="PDBsum" id="6HZB"/>
<dbReference type="PDBsum" id="6HZC"/>
<dbReference type="PDBsum" id="6HZD"/>
<dbReference type="PDBsum" id="6YD2"/>
<dbReference type="PDBsum" id="6YD3"/>
<dbReference type="PDBsum" id="6YD4"/>
<dbReference type="PDBsum" id="6YD7"/>
<dbReference type="PDBsum" id="7LCU"/>
<dbReference type="PDBsum" id="7O1U"/>
<dbReference type="PDBsum" id="7O1W"/>
<dbReference type="PDBsum" id="7O1Y"/>
<dbReference type="PDBsum" id="7O20"/>
<dbReference type="PDBsum" id="7O22"/>
<dbReference type="PDBsum" id="7QXY"/>
<dbReference type="PDBsum" id="7QXZ"/>
<dbReference type="PDBsum" id="7QY0"/>
<dbReference type="PDBsum" id="7QY1"/>
<dbReference type="PDBsum" id="7QY2"/>
<dbReference type="PDBsum" id="8B4V"/>
<dbReference type="PDBsum" id="8B4W"/>
<dbReference type="PDBsum" id="8B4X"/>
<dbReference type="PDBsum" id="8OYH"/>
<dbReference type="SMR" id="P09958"/>
<dbReference type="BioGRID" id="111082">
    <property type="interactions" value="250"/>
</dbReference>
<dbReference type="CORUM" id="P09958"/>
<dbReference type="DIP" id="DIP-29904N"/>
<dbReference type="ELM" id="P09958"/>
<dbReference type="FunCoup" id="P09958">
    <property type="interactions" value="231"/>
</dbReference>
<dbReference type="IntAct" id="P09958">
    <property type="interactions" value="58"/>
</dbReference>
<dbReference type="MINT" id="P09958"/>
<dbReference type="STRING" id="9606.ENSP00000483552"/>
<dbReference type="BindingDB" id="P09958"/>
<dbReference type="ChEMBL" id="CHEMBL2611"/>
<dbReference type="DrugBank" id="DB03600">
    <property type="generic name" value="Capric acid"/>
</dbReference>
<dbReference type="GuidetoPHARMACOLOGY" id="2366"/>
<dbReference type="MEROPS" id="S08.071"/>
<dbReference type="TCDB" id="1.A.9.1.24">
    <property type="family name" value="the neurotransmitter receptor, cys loop, ligand-gated ion channel (lic) family"/>
</dbReference>
<dbReference type="GlyCosmos" id="P09958">
    <property type="glycosylation" value="3 sites, No reported glycans"/>
</dbReference>
<dbReference type="GlyGen" id="P09958">
    <property type="glycosylation" value="3 sites"/>
</dbReference>
<dbReference type="iPTMnet" id="P09958"/>
<dbReference type="PhosphoSitePlus" id="P09958"/>
<dbReference type="SwissPalm" id="P09958"/>
<dbReference type="BioMuta" id="FURIN"/>
<dbReference type="DMDM" id="120611"/>
<dbReference type="OGP" id="P09958"/>
<dbReference type="jPOST" id="P09958"/>
<dbReference type="MassIVE" id="P09958"/>
<dbReference type="PaxDb" id="9606-ENSP00000483552"/>
<dbReference type="PeptideAtlas" id="P09958"/>
<dbReference type="ProteomicsDB" id="52283"/>
<dbReference type="Pumba" id="P09958"/>
<dbReference type="ABCD" id="P09958">
    <property type="antibodies" value="1 sequenced antibody"/>
</dbReference>
<dbReference type="Antibodypedia" id="4013">
    <property type="antibodies" value="459 antibodies from 39 providers"/>
</dbReference>
<dbReference type="DNASU" id="5045"/>
<dbReference type="Ensembl" id="ENST00000268171.8">
    <property type="protein sequence ID" value="ENSP00000268171.2"/>
    <property type="gene ID" value="ENSG00000140564.13"/>
</dbReference>
<dbReference type="Ensembl" id="ENST00000610579.4">
    <property type="protein sequence ID" value="ENSP00000484952.1"/>
    <property type="gene ID" value="ENSG00000140564.13"/>
</dbReference>
<dbReference type="Ensembl" id="ENST00000618099.4">
    <property type="protein sequence ID" value="ENSP00000483552.1"/>
    <property type="gene ID" value="ENSG00000140564.13"/>
</dbReference>
<dbReference type="Ensembl" id="ENST00000680053.1">
    <property type="protein sequence ID" value="ENSP00000506143.1"/>
    <property type="gene ID" value="ENSG00000140564.13"/>
</dbReference>
<dbReference type="GeneID" id="5045"/>
<dbReference type="KEGG" id="hsa:5045"/>
<dbReference type="MANE-Select" id="ENST00000268171.8">
    <property type="protein sequence ID" value="ENSP00000268171.2"/>
    <property type="RefSeq nucleotide sequence ID" value="NM_002569.4"/>
    <property type="RefSeq protein sequence ID" value="NP_002560.1"/>
</dbReference>
<dbReference type="UCSC" id="uc002bpu.2">
    <property type="organism name" value="human"/>
</dbReference>
<dbReference type="AGR" id="HGNC:8568"/>
<dbReference type="CTD" id="5045"/>
<dbReference type="DisGeNET" id="5045"/>
<dbReference type="GeneCards" id="FURIN"/>
<dbReference type="HGNC" id="HGNC:8568">
    <property type="gene designation" value="FURIN"/>
</dbReference>
<dbReference type="HPA" id="ENSG00000140564">
    <property type="expression patterns" value="Tissue enhanced (liver, salivary gland)"/>
</dbReference>
<dbReference type="MIM" id="136950">
    <property type="type" value="gene"/>
</dbReference>
<dbReference type="neXtProt" id="NX_P09958"/>
<dbReference type="OpenTargets" id="ENSG00000140564"/>
<dbReference type="PharmGKB" id="PA32894"/>
<dbReference type="VEuPathDB" id="HostDB:ENSG00000140564"/>
<dbReference type="eggNOG" id="KOG3525">
    <property type="taxonomic scope" value="Eukaryota"/>
</dbReference>
<dbReference type="GeneTree" id="ENSGT00940000157220"/>
<dbReference type="HOGENOM" id="CLU_002976_4_0_1"/>
<dbReference type="InParanoid" id="P09958"/>
<dbReference type="OMA" id="IYLVSPM"/>
<dbReference type="OrthoDB" id="300641at2759"/>
<dbReference type="PAN-GO" id="P09958">
    <property type="GO annotations" value="5 GO annotations based on evolutionary models"/>
</dbReference>
<dbReference type="PhylomeDB" id="P09958"/>
<dbReference type="TreeFam" id="TF314277"/>
<dbReference type="BRENDA" id="3.4.21.75">
    <property type="organism ID" value="2681"/>
</dbReference>
<dbReference type="PathwayCommons" id="P09958"/>
<dbReference type="Reactome" id="R-HSA-1181150">
    <property type="pathway name" value="Signaling by NODAL"/>
</dbReference>
<dbReference type="Reactome" id="R-HSA-1442490">
    <property type="pathway name" value="Collagen degradation"/>
</dbReference>
<dbReference type="Reactome" id="R-HSA-1566948">
    <property type="pathway name" value="Elastic fibre formation"/>
</dbReference>
<dbReference type="Reactome" id="R-HSA-1592389">
    <property type="pathway name" value="Activation of Matrix Metalloproteinases"/>
</dbReference>
<dbReference type="Reactome" id="R-HSA-159782">
    <property type="pathway name" value="Removal of aminoterminal propeptides from gamma-carboxylated proteins"/>
</dbReference>
<dbReference type="Reactome" id="R-HSA-167060">
    <property type="pathway name" value="NGF processing"/>
</dbReference>
<dbReference type="Reactome" id="R-HSA-171286">
    <property type="pathway name" value="Synthesis and processing of ENV and VPU"/>
</dbReference>
<dbReference type="Reactome" id="R-HSA-186797">
    <property type="pathway name" value="Signaling by PDGF"/>
</dbReference>
<dbReference type="Reactome" id="R-HSA-1912420">
    <property type="pathway name" value="Pre-NOTCH Processing in Golgi"/>
</dbReference>
<dbReference type="Reactome" id="R-HSA-2173789">
    <property type="pathway name" value="TGF-beta receptor signaling activates SMADs"/>
</dbReference>
<dbReference type="Reactome" id="R-HSA-2173796">
    <property type="pathway name" value="SMAD2/SMAD3:SMAD4 heterotrimer regulates transcription"/>
</dbReference>
<dbReference type="Reactome" id="R-HSA-5210891">
    <property type="pathway name" value="Uptake and function of anthrax toxins"/>
</dbReference>
<dbReference type="Reactome" id="R-HSA-6809371">
    <property type="pathway name" value="Formation of the cornified envelope"/>
</dbReference>
<dbReference type="Reactome" id="R-HSA-8963889">
    <property type="pathway name" value="Assembly of active LPL and LIPC lipase complexes"/>
</dbReference>
<dbReference type="Reactome" id="R-HSA-9662834">
    <property type="pathway name" value="CD163 mediating an anti-inflammatory response"/>
</dbReference>
<dbReference type="Reactome" id="R-HSA-9679191">
    <property type="pathway name" value="Potential therapeutics for SARS"/>
</dbReference>
<dbReference type="Reactome" id="R-HSA-9694614">
    <property type="pathway name" value="Attachment and Entry"/>
</dbReference>
<dbReference type="Reactome" id="R-HSA-9733458">
    <property type="pathway name" value="Induction of Cell-Cell Fusion"/>
</dbReference>
<dbReference type="Reactome" id="R-HSA-977225">
    <property type="pathway name" value="Amyloid fiber formation"/>
</dbReference>
<dbReference type="Reactome" id="R-HSA-9820960">
    <property type="pathway name" value="Respiratory syncytial virus (RSV) attachment and entry"/>
</dbReference>
<dbReference type="Reactome" id="R-HSA-9828806">
    <property type="pathway name" value="Maturation of hRSV A proteins"/>
</dbReference>
<dbReference type="SignaLink" id="P09958"/>
<dbReference type="SIGNOR" id="P09958"/>
<dbReference type="BioGRID-ORCS" id="5045">
    <property type="hits" value="166 hits in 1183 CRISPR screens"/>
</dbReference>
<dbReference type="ChiTaRS" id="FURIN">
    <property type="organism name" value="human"/>
</dbReference>
<dbReference type="EvolutionaryTrace" id="P09958"/>
<dbReference type="GeneWiki" id="Furin"/>
<dbReference type="GenomeRNAi" id="5045"/>
<dbReference type="Pharos" id="P09958">
    <property type="development level" value="Tchem"/>
</dbReference>
<dbReference type="PRO" id="PR:P09958"/>
<dbReference type="Proteomes" id="UP000005640">
    <property type="component" value="Chromosome 15"/>
</dbReference>
<dbReference type="RNAct" id="P09958">
    <property type="molecule type" value="protein"/>
</dbReference>
<dbReference type="Bgee" id="ENSG00000140564">
    <property type="expression patterns" value="Expressed in right lobe of liver and 192 other cell types or tissues"/>
</dbReference>
<dbReference type="ExpressionAtlas" id="P09958">
    <property type="expression patterns" value="baseline and differential"/>
</dbReference>
<dbReference type="GO" id="GO:0009986">
    <property type="term" value="C:cell surface"/>
    <property type="evidence" value="ECO:0000314"/>
    <property type="project" value="BHF-UCL"/>
</dbReference>
<dbReference type="GO" id="GO:0005783">
    <property type="term" value="C:endoplasmic reticulum"/>
    <property type="evidence" value="ECO:0000316"/>
    <property type="project" value="BHF-UCL"/>
</dbReference>
<dbReference type="GO" id="GO:0010008">
    <property type="term" value="C:endosome membrane"/>
    <property type="evidence" value="ECO:0007669"/>
    <property type="project" value="UniProtKB-SubCell"/>
</dbReference>
<dbReference type="GO" id="GO:0070062">
    <property type="term" value="C:extracellular exosome"/>
    <property type="evidence" value="ECO:0007005"/>
    <property type="project" value="UniProtKB"/>
</dbReference>
<dbReference type="GO" id="GO:0005576">
    <property type="term" value="C:extracellular region"/>
    <property type="evidence" value="ECO:0000304"/>
    <property type="project" value="Reactome"/>
</dbReference>
<dbReference type="GO" id="GO:0005796">
    <property type="term" value="C:Golgi lumen"/>
    <property type="evidence" value="ECO:0000304"/>
    <property type="project" value="Reactome"/>
</dbReference>
<dbReference type="GO" id="GO:0000139">
    <property type="term" value="C:Golgi membrane"/>
    <property type="evidence" value="ECO:0000315"/>
    <property type="project" value="UniProtKB"/>
</dbReference>
<dbReference type="GO" id="GO:0016020">
    <property type="term" value="C:membrane"/>
    <property type="evidence" value="ECO:0007005"/>
    <property type="project" value="UniProtKB"/>
</dbReference>
<dbReference type="GO" id="GO:0045121">
    <property type="term" value="C:membrane raft"/>
    <property type="evidence" value="ECO:0000314"/>
    <property type="project" value="BHF-UCL"/>
</dbReference>
<dbReference type="GO" id="GO:0005886">
    <property type="term" value="C:plasma membrane"/>
    <property type="evidence" value="ECO:0000304"/>
    <property type="project" value="Reactome"/>
</dbReference>
<dbReference type="GO" id="GO:0005802">
    <property type="term" value="C:trans-Golgi network"/>
    <property type="evidence" value="ECO:0000314"/>
    <property type="project" value="BHF-UCL"/>
</dbReference>
<dbReference type="GO" id="GO:0030140">
    <property type="term" value="C:trans-Golgi network transport vesicle"/>
    <property type="evidence" value="ECO:0000314"/>
    <property type="project" value="MGI"/>
</dbReference>
<dbReference type="GO" id="GO:0061133">
    <property type="term" value="F:endopeptidase activator activity"/>
    <property type="evidence" value="ECO:0000314"/>
    <property type="project" value="BHF-UCL"/>
</dbReference>
<dbReference type="GO" id="GO:0004175">
    <property type="term" value="F:endopeptidase activity"/>
    <property type="evidence" value="ECO:0000314"/>
    <property type="project" value="UniProtKB"/>
</dbReference>
<dbReference type="GO" id="GO:1904399">
    <property type="term" value="F:heparan sulfate binding"/>
    <property type="evidence" value="ECO:0000314"/>
    <property type="project" value="UniProtKB"/>
</dbReference>
<dbReference type="GO" id="GO:0008201">
    <property type="term" value="F:heparin binding"/>
    <property type="evidence" value="ECO:0000314"/>
    <property type="project" value="UniProtKB"/>
</dbReference>
<dbReference type="GO" id="GO:0046872">
    <property type="term" value="F:metal ion binding"/>
    <property type="evidence" value="ECO:0007669"/>
    <property type="project" value="UniProtKB-KW"/>
</dbReference>
<dbReference type="GO" id="GO:0048406">
    <property type="term" value="F:nerve growth factor binding"/>
    <property type="evidence" value="ECO:0000314"/>
    <property type="project" value="BHF-UCL"/>
</dbReference>
<dbReference type="GO" id="GO:0008233">
    <property type="term" value="F:peptidase activity"/>
    <property type="evidence" value="ECO:0000314"/>
    <property type="project" value="UniProtKB"/>
</dbReference>
<dbReference type="GO" id="GO:0042277">
    <property type="term" value="F:peptide binding"/>
    <property type="evidence" value="ECO:0000314"/>
    <property type="project" value="BHF-UCL"/>
</dbReference>
<dbReference type="GO" id="GO:0002020">
    <property type="term" value="F:protease binding"/>
    <property type="evidence" value="ECO:0000353"/>
    <property type="project" value="BHF-UCL"/>
</dbReference>
<dbReference type="GO" id="GO:0004252">
    <property type="term" value="F:serine-type endopeptidase activity"/>
    <property type="evidence" value="ECO:0000314"/>
    <property type="project" value="UniProtKB"/>
</dbReference>
<dbReference type="GO" id="GO:0004867">
    <property type="term" value="F:serine-type endopeptidase inhibitor activity"/>
    <property type="evidence" value="ECO:0000314"/>
    <property type="project" value="BHF-UCL"/>
</dbReference>
<dbReference type="GO" id="GO:0008236">
    <property type="term" value="F:serine-type peptidase activity"/>
    <property type="evidence" value="ECO:0000314"/>
    <property type="project" value="UniProt"/>
</dbReference>
<dbReference type="GO" id="GO:1990000">
    <property type="term" value="P:amyloid fibril formation"/>
    <property type="evidence" value="ECO:0000304"/>
    <property type="project" value="Reactome"/>
</dbReference>
<dbReference type="GO" id="GO:0001825">
    <property type="term" value="P:blastocyst formation"/>
    <property type="evidence" value="ECO:0007669"/>
    <property type="project" value="Ensembl"/>
</dbReference>
<dbReference type="GO" id="GO:0030574">
    <property type="term" value="P:collagen catabolic process"/>
    <property type="evidence" value="ECO:0000304"/>
    <property type="project" value="Reactome"/>
</dbReference>
<dbReference type="GO" id="GO:0140447">
    <property type="term" value="P:cytokine precursor processing"/>
    <property type="evidence" value="ECO:0000314"/>
    <property type="project" value="UniProtKB"/>
</dbReference>
<dbReference type="GO" id="GO:0090472">
    <property type="term" value="P:dibasic protein processing"/>
    <property type="evidence" value="ECO:0000315"/>
    <property type="project" value="UniProtKB"/>
</dbReference>
<dbReference type="GO" id="GO:0022617">
    <property type="term" value="P:extracellular matrix disassembly"/>
    <property type="evidence" value="ECO:0000304"/>
    <property type="project" value="Reactome"/>
</dbReference>
<dbReference type="GO" id="GO:0030198">
    <property type="term" value="P:extracellular matrix organization"/>
    <property type="evidence" value="ECO:0000304"/>
    <property type="project" value="Reactome"/>
</dbReference>
<dbReference type="GO" id="GO:0002862">
    <property type="term" value="P:negative regulation of inflammatory response to antigenic stimulus"/>
    <property type="evidence" value="ECO:0000304"/>
    <property type="project" value="Reactome"/>
</dbReference>
<dbReference type="GO" id="GO:0032804">
    <property type="term" value="P:negative regulation of low-density lipoprotein particle receptor catabolic process"/>
    <property type="evidence" value="ECO:0000314"/>
    <property type="project" value="HGNC-UCL"/>
</dbReference>
<dbReference type="GO" id="GO:0032911">
    <property type="term" value="P:negative regulation of transforming growth factor beta1 production"/>
    <property type="evidence" value="ECO:0000315"/>
    <property type="project" value="BHF-UCL"/>
</dbReference>
<dbReference type="GO" id="GO:0032902">
    <property type="term" value="P:nerve growth factor production"/>
    <property type="evidence" value="ECO:0000314"/>
    <property type="project" value="BHF-UCL"/>
</dbReference>
<dbReference type="GO" id="GO:0043043">
    <property type="term" value="P:peptide biosynthetic process"/>
    <property type="evidence" value="ECO:0000314"/>
    <property type="project" value="BHF-UCL"/>
</dbReference>
<dbReference type="GO" id="GO:0016486">
    <property type="term" value="P:peptide hormone processing"/>
    <property type="evidence" value="ECO:0000314"/>
    <property type="project" value="BHF-UCL"/>
</dbReference>
<dbReference type="GO" id="GO:0034369">
    <property type="term" value="P:plasma lipoprotein particle remodeling"/>
    <property type="evidence" value="ECO:0000304"/>
    <property type="project" value="Reactome"/>
</dbReference>
<dbReference type="GO" id="GO:0051044">
    <property type="term" value="P:positive regulation of membrane protein ectodomain proteolysis"/>
    <property type="evidence" value="ECO:0000305"/>
    <property type="project" value="BHF-UCL"/>
</dbReference>
<dbReference type="GO" id="GO:0046598">
    <property type="term" value="P:positive regulation of viral entry into host cell"/>
    <property type="evidence" value="ECO:0000314"/>
    <property type="project" value="UniProtKB"/>
</dbReference>
<dbReference type="GO" id="GO:0051604">
    <property type="term" value="P:protein maturation"/>
    <property type="evidence" value="ECO:0000314"/>
    <property type="project" value="UniProt"/>
</dbReference>
<dbReference type="GO" id="GO:0016485">
    <property type="term" value="P:protein processing"/>
    <property type="evidence" value="ECO:0000314"/>
    <property type="project" value="UniProtKB"/>
</dbReference>
<dbReference type="GO" id="GO:0032374">
    <property type="term" value="P:regulation of cholesterol transport"/>
    <property type="evidence" value="ECO:0007669"/>
    <property type="project" value="Ensembl"/>
</dbReference>
<dbReference type="GO" id="GO:0042176">
    <property type="term" value="P:regulation of protein catabolic process"/>
    <property type="evidence" value="ECO:0000315"/>
    <property type="project" value="BHF-UCL"/>
</dbReference>
<dbReference type="GO" id="GO:0009966">
    <property type="term" value="P:regulation of signal transduction"/>
    <property type="evidence" value="ECO:0007669"/>
    <property type="project" value="Ensembl"/>
</dbReference>
<dbReference type="GO" id="GO:0032940">
    <property type="term" value="P:secretion by cell"/>
    <property type="evidence" value="ECO:0000314"/>
    <property type="project" value="BHF-UCL"/>
</dbReference>
<dbReference type="GO" id="GO:0006465">
    <property type="term" value="P:signal peptide processing"/>
    <property type="evidence" value="ECO:0000314"/>
    <property type="project" value="HGNC-UCL"/>
</dbReference>
<dbReference type="GO" id="GO:0007179">
    <property type="term" value="P:transforming growth factor beta receptor signaling pathway"/>
    <property type="evidence" value="ECO:0000304"/>
    <property type="project" value="Reactome"/>
</dbReference>
<dbReference type="GO" id="GO:0019058">
    <property type="term" value="P:viral life cycle"/>
    <property type="evidence" value="ECO:0000270"/>
    <property type="project" value="BHF-UCL"/>
</dbReference>
<dbReference type="GO" id="GO:0019082">
    <property type="term" value="P:viral protein processing"/>
    <property type="evidence" value="ECO:0000304"/>
    <property type="project" value="Reactome"/>
</dbReference>
<dbReference type="GO" id="GO:0019081">
    <property type="term" value="P:viral translation"/>
    <property type="evidence" value="ECO:0000304"/>
    <property type="project" value="UniProt"/>
</dbReference>
<dbReference type="GO" id="GO:0031638">
    <property type="term" value="P:zymogen activation"/>
    <property type="evidence" value="ECO:0000315"/>
    <property type="project" value="UniProtKB"/>
</dbReference>
<dbReference type="CDD" id="cd00064">
    <property type="entry name" value="FU"/>
    <property type="match status" value="2"/>
</dbReference>
<dbReference type="CDD" id="cd04059">
    <property type="entry name" value="Peptidases_S8_Protein_convertases_Kexins_Furin-like"/>
    <property type="match status" value="1"/>
</dbReference>
<dbReference type="FunFam" id="3.40.50.200:FF:000001">
    <property type="entry name" value="Furin 2, isoform B"/>
    <property type="match status" value="1"/>
</dbReference>
<dbReference type="FunFam" id="2.60.120.260:FF:000034">
    <property type="entry name" value="furin isoform X2"/>
    <property type="match status" value="1"/>
</dbReference>
<dbReference type="FunFam" id="2.10.220.10:FF:000023">
    <property type="entry name" value="Furin, paired basic amino acid cleaving enzyme"/>
    <property type="match status" value="1"/>
</dbReference>
<dbReference type="FunFam" id="3.30.70.850:FF:000001">
    <property type="entry name" value="Proprotein convertase subtilisin/kexin type 5"/>
    <property type="match status" value="1"/>
</dbReference>
<dbReference type="Gene3D" id="2.60.120.260">
    <property type="entry name" value="Galactose-binding domain-like"/>
    <property type="match status" value="1"/>
</dbReference>
<dbReference type="Gene3D" id="2.10.220.10">
    <property type="entry name" value="Hormone Receptor, Insulin-like Growth Factor Receptor 1, Chain A, domain 2"/>
    <property type="match status" value="1"/>
</dbReference>
<dbReference type="Gene3D" id="3.30.70.850">
    <property type="entry name" value="Peptidase S8, pro-domain"/>
    <property type="match status" value="1"/>
</dbReference>
<dbReference type="Gene3D" id="3.40.50.200">
    <property type="entry name" value="Peptidase S8/S53 domain"/>
    <property type="match status" value="1"/>
</dbReference>
<dbReference type="InterPro" id="IPR006212">
    <property type="entry name" value="Furin_repeat"/>
</dbReference>
<dbReference type="InterPro" id="IPR008979">
    <property type="entry name" value="Galactose-bd-like_sf"/>
</dbReference>
<dbReference type="InterPro" id="IPR009030">
    <property type="entry name" value="Growth_fac_rcpt_cys_sf"/>
</dbReference>
<dbReference type="InterPro" id="IPR034182">
    <property type="entry name" value="Kexin/furin"/>
</dbReference>
<dbReference type="InterPro" id="IPR002884">
    <property type="entry name" value="P_dom"/>
</dbReference>
<dbReference type="InterPro" id="IPR000209">
    <property type="entry name" value="Peptidase_S8/S53_dom"/>
</dbReference>
<dbReference type="InterPro" id="IPR036852">
    <property type="entry name" value="Peptidase_S8/S53_dom_sf"/>
</dbReference>
<dbReference type="InterPro" id="IPR023827">
    <property type="entry name" value="Peptidase_S8_Asp-AS"/>
</dbReference>
<dbReference type="InterPro" id="IPR022398">
    <property type="entry name" value="Peptidase_S8_His-AS"/>
</dbReference>
<dbReference type="InterPro" id="IPR023828">
    <property type="entry name" value="Peptidase_S8_Ser-AS"/>
</dbReference>
<dbReference type="InterPro" id="IPR015500">
    <property type="entry name" value="Peptidase_S8_subtilisin-rel"/>
</dbReference>
<dbReference type="InterPro" id="IPR032815">
    <property type="entry name" value="S8_pro-domain"/>
</dbReference>
<dbReference type="InterPro" id="IPR038466">
    <property type="entry name" value="S8_pro-domain_sf"/>
</dbReference>
<dbReference type="PANTHER" id="PTHR42884:SF1">
    <property type="entry name" value="FURIN"/>
    <property type="match status" value="1"/>
</dbReference>
<dbReference type="PANTHER" id="PTHR42884">
    <property type="entry name" value="PROPROTEIN CONVERTASE SUBTILISIN/KEXIN-RELATED"/>
    <property type="match status" value="1"/>
</dbReference>
<dbReference type="Pfam" id="PF01483">
    <property type="entry name" value="P_proprotein"/>
    <property type="match status" value="1"/>
</dbReference>
<dbReference type="Pfam" id="PF00082">
    <property type="entry name" value="Peptidase_S8"/>
    <property type="match status" value="1"/>
</dbReference>
<dbReference type="Pfam" id="PF16470">
    <property type="entry name" value="S8_pro-domain"/>
    <property type="match status" value="1"/>
</dbReference>
<dbReference type="PRINTS" id="PR00723">
    <property type="entry name" value="SUBTILISIN"/>
</dbReference>
<dbReference type="SMART" id="SM00261">
    <property type="entry name" value="FU"/>
    <property type="match status" value="2"/>
</dbReference>
<dbReference type="SUPFAM" id="SSF49785">
    <property type="entry name" value="Galactose-binding domain-like"/>
    <property type="match status" value="1"/>
</dbReference>
<dbReference type="SUPFAM" id="SSF57184">
    <property type="entry name" value="Growth factor receptor domain"/>
    <property type="match status" value="1"/>
</dbReference>
<dbReference type="SUPFAM" id="SSF54897">
    <property type="entry name" value="Protease propeptides/inhibitors"/>
    <property type="match status" value="1"/>
</dbReference>
<dbReference type="SUPFAM" id="SSF52743">
    <property type="entry name" value="Subtilisin-like"/>
    <property type="match status" value="1"/>
</dbReference>
<dbReference type="PROSITE" id="PS51829">
    <property type="entry name" value="P_HOMO_B"/>
    <property type="match status" value="1"/>
</dbReference>
<dbReference type="PROSITE" id="PS51892">
    <property type="entry name" value="SUBTILASE"/>
    <property type="match status" value="1"/>
</dbReference>
<dbReference type="PROSITE" id="PS00136">
    <property type="entry name" value="SUBTILASE_ASP"/>
    <property type="match status" value="1"/>
</dbReference>
<dbReference type="PROSITE" id="PS00137">
    <property type="entry name" value="SUBTILASE_HIS"/>
    <property type="match status" value="1"/>
</dbReference>
<dbReference type="PROSITE" id="PS00138">
    <property type="entry name" value="SUBTILASE_SER"/>
    <property type="match status" value="1"/>
</dbReference>
<keyword id="KW-0002">3D-structure</keyword>
<keyword id="KW-0068">Autocatalytic cleavage</keyword>
<keyword id="KW-0106">Calcium</keyword>
<keyword id="KW-1003">Cell membrane</keyword>
<keyword id="KW-0165">Cleavage on pair of basic residues</keyword>
<keyword id="KW-1015">Disulfide bond</keyword>
<keyword id="KW-0967">Endosome</keyword>
<keyword id="KW-0325">Glycoprotein</keyword>
<keyword id="KW-0333">Golgi apparatus</keyword>
<keyword id="KW-0358">Heparin-binding</keyword>
<keyword id="KW-0945">Host-virus interaction</keyword>
<keyword id="KW-0378">Hydrolase</keyword>
<keyword id="KW-0472">Membrane</keyword>
<keyword id="KW-0479">Metal-binding</keyword>
<keyword id="KW-0597">Phosphoprotein</keyword>
<keyword id="KW-0645">Protease</keyword>
<keyword id="KW-1267">Proteomics identification</keyword>
<keyword id="KW-1185">Reference proteome</keyword>
<keyword id="KW-0677">Repeat</keyword>
<keyword id="KW-0964">Secreted</keyword>
<keyword id="KW-0720">Serine protease</keyword>
<keyword id="KW-0732">Signal</keyword>
<keyword id="KW-0812">Transmembrane</keyword>
<keyword id="KW-1133">Transmembrane helix</keyword>
<keyword id="KW-0865">Zymogen</keyword>
<proteinExistence type="evidence at protein level"/>
<sequence>MELRPWLLWVVAATGTLVLLAADAQGQKVFTNTWAVRIPGGPAVANSVARKHGFLNLGQIFGDYYHFWHRGVTKRSLSPHRPRHSRLQREPQVQWLEQQVAKRRTKRDVYQEPTDPKFPQQWYLSGVTQRDLNVKAAWAQGYTGHGIVVSILDDGIEKNHPDLAGNYDPGASFDVNDQDPDPQPRYTQMNDNRHGTRCAGEVAAVANNGVCGVGVAYNARIGGVRMLDGEVTDAVEARSLGLNPNHIHIYSASWGPEDDGKTVDGPARLAEEAFFRGVSQGRGGLGSIFVWASGNGGREHDSCNCDGYTNSIYTLSISSATQFGNVPWYSEACSSTLATTYSSGNQNEKQIVTTDLRQKCTESHTGTSASAPLAAGIIALTLEANKNLTWRDMQHLVVQTSKPAHLNANDWATNGVGRKVSHSYGYGLLDAGAMVALAQNWTTVAPQRKCIIDILTEPKDIGKRLEVRKTVTACLGEPNHITRLEHAQARLTLSYNRRGDLAIHLVSPMGTRSTLLAARPHDYSADGFNDWAFMTTHSWDEDPSGEWVLEIENTSEANNYGTLTKFTLVLYGTAPEGLPVPPESSGCKTLTSSQACVVCEEGFSLHQKSCVQHCPPGFAPQVLDTHYSTENDVETIRASVCAPCHASCATCQGPALTDCLSCPSHASLDPVEQTCSRQSQSSRESPPQQQPPRLPPEVEAGQRLRAGLLPSHLPEVVAGLSCAFIVLVFVTVFLVLQLRSGFSFRGVKVYTMDRGLISYKGLPPEAWQEECPSDSEEDEGRGERTAFIKDQSAL</sequence>
<reference key="1">
    <citation type="journal article" date="1990" name="Nucleic Acids Res.">
        <title>Structural homology between the human fur gene product and the subtilisin-like protease encoded by yeast KEX2.</title>
        <authorList>
            <person name="van den Ouweland A.M.W."/>
            <person name="van Duijnhoven H.L.P."/>
            <person name="Keizer G.D."/>
            <person name="Dorssers L.C.J."/>
            <person name="van de Ven W.J.M."/>
        </authorList>
    </citation>
    <scope>NUCLEOTIDE SEQUENCE [MRNA]</scope>
    <source>
        <tissue>Blood</tissue>
    </source>
</reference>
<reference key="2">
    <citation type="journal article" date="1990" name="Proc. Natl. Acad. Sci. U.S.A.">
        <title>Expression of a human proprotein processing enzyme: correct cleavage of the von Willebrand factor precursor at a paired basic amino acid site.</title>
        <authorList>
            <person name="Wise R.J."/>
            <person name="Barr P.J."/>
            <person name="Wong P.A."/>
            <person name="Kiefer M.C."/>
            <person name="Brake A.J."/>
            <person name="Kaufman R.J."/>
        </authorList>
    </citation>
    <scope>NUCLEOTIDE SEQUENCE [MRNA]</scope>
    <scope>FUNCTION</scope>
    <scope>CATALYTIC ACTIVITY</scope>
</reference>
<reference key="3">
    <citation type="journal article" date="1991" name="DNA Cell Biol.">
        <title>cDNA and gene structure for a human subtilisin-like protease with cleavage specificity for paired basic amino acid residues.</title>
        <authorList>
            <person name="Barr P.J."/>
            <person name="Mason O.B."/>
            <person name="Landsberg K.E."/>
            <person name="Wong P.A."/>
            <person name="Kiefer M.C."/>
            <person name="Brake A.J."/>
        </authorList>
    </citation>
    <scope>NUCLEOTIDE SEQUENCE [MRNA]</scope>
    <scope>FUNCTION</scope>
    <scope>CATALYTIC ACTIVITY</scope>
    <scope>TISSUE SPECIFICITY</scope>
</reference>
<reference key="4">
    <citation type="journal article" date="2004" name="Genome Res.">
        <title>The status, quality, and expansion of the NIH full-length cDNA project: the Mammalian Gene Collection (MGC).</title>
        <authorList>
            <consortium name="The MGC Project Team"/>
        </authorList>
    </citation>
    <scope>NUCLEOTIDE SEQUENCE [LARGE SCALE MRNA]</scope>
    <source>
        <tissue>Lung</tissue>
    </source>
</reference>
<reference key="5">
    <citation type="journal article" date="1989" name="Nucleic Acids Res.">
        <title>Nucleotide sequence analysis of the human fur gene.</title>
        <authorList>
            <person name="Van den Ouweland A.M.W."/>
            <person name="van Groningen J.J.M."/>
            <person name="Roebrock A.J.M."/>
            <person name="Onnekink C."/>
            <person name="Van de Ven W.J.M."/>
        </authorList>
    </citation>
    <scope>NUCLEOTIDE SEQUENCE [GENOMIC DNA] OF 1-280</scope>
</reference>
<reference key="6">
    <citation type="journal article" date="1986" name="EMBO J.">
        <title>Evolutionary conserved close linkage of the c-fes/fps proto-oncogene and genetic sequences encoding a receptor-like protein.</title>
        <authorList>
            <person name="Roebroek A.J.M."/>
            <person name="Schalken J.A."/>
            <person name="Leunissen J.A.M."/>
            <person name="Onnekink C."/>
            <person name="Bloemers H.P.J."/>
            <person name="van de Ven W.J.M."/>
        </authorList>
    </citation>
    <scope>NUCLEOTIDE SEQUENCE [GENOMIC DNA] OF 296-794</scope>
</reference>
<reference key="7">
    <citation type="journal article" date="1993" name="Biochem. Biophys. Res. Commun.">
        <title>A mutation of furin causes the lack of precursor-processing activity in human colon carcinoma LoVo cells.</title>
        <authorList>
            <person name="Takahashi S."/>
            <person name="Kasai K."/>
            <person name="Hatsuzawa K."/>
            <person name="Kitamura N."/>
            <person name="Misumi Y."/>
            <person name="Ikehara Y."/>
            <person name="Murakami K."/>
            <person name="Nakayama K."/>
        </authorList>
    </citation>
    <scope>NUCLEOTIDE SEQUENCE [MRNA] OF 402-428</scope>
    <scope>FUNCTION</scope>
    <scope>CATALYTIC ACTIVITY</scope>
    <source>
        <tissue>Colon carcinoma</tissue>
    </source>
</reference>
<reference key="8">
    <citation type="journal article" date="1995" name="J. Biol. Chem.">
        <title>A second mutant allele of furin in the processing-incompetent cell line, LoVo. Evidence for involvement of the homo B domain in autocatalytic activation.</title>
        <authorList>
            <person name="Takahashi S."/>
            <person name="Nakagawa T."/>
            <person name="Kasai K."/>
            <person name="Banno T."/>
            <person name="Duguay S.J."/>
            <person name="Van de Ven W.J.M."/>
            <person name="Murakami K."/>
            <person name="Nakayama K."/>
        </authorList>
    </citation>
    <scope>NUCLEOTIDE SEQUENCE [MRNA] OF 527-553</scope>
    <scope>FUNCTION</scope>
    <scope>CATALYTIC ACTIVITY</scope>
    <scope>VARIANT ARG-547</scope>
    <source>
        <tissue>Colon carcinoma</tissue>
    </source>
</reference>
<reference key="9">
    <citation type="journal article" date="1992" name="J. Biol. Chem.">
        <title>Activation of human furin precursor processing endoprotease occurs by an intramolecular autoproteolytic cleavage.</title>
        <authorList>
            <person name="Leduc R."/>
            <person name="Molloy S.S."/>
            <person name="Thorne B.A."/>
            <person name="Thomas G."/>
        </authorList>
    </citation>
    <scope>FUNCTION</scope>
    <scope>CATALYTIC ACTIVITY</scope>
    <scope>PROTEOLYTIC PROCESSING</scope>
</reference>
<reference key="10">
    <citation type="journal article" date="1992" name="J. Biol. Chem.">
        <title>Human furin is a calcium-dependent serine endoprotease that recognizes the sequence Arg-X-X-Arg and efficiently cleaves anthrax toxin protective antigen.</title>
        <authorList>
            <person name="Molloy S.S."/>
            <person name="Bresnahan P.A."/>
            <person name="Leppla S.H."/>
            <person name="Klimpel K.R."/>
            <person name="Thomas G."/>
        </authorList>
    </citation>
    <scope>FUNCTION (MICROBIAL INFECTION)</scope>
    <scope>CATALYTIC ACTIVITY</scope>
    <scope>COFACTOR</scope>
</reference>
<reference key="11">
    <citation type="journal article" date="1992" name="Proc. Natl. Acad. Sci. U.S.A.">
        <title>Anthrax toxin protective antigen is activated by a cell surface protease with the sequence specificity and catalytic properties of furin.</title>
        <authorList>
            <person name="Klimpel K.R."/>
            <person name="Molloy S.S."/>
            <person name="Thomas G."/>
            <person name="Leppla S.H."/>
        </authorList>
    </citation>
    <scope>FUNCTION (MICROBIAL INFECTION)</scope>
    <scope>CATALYTIC ACTIVITY</scope>
</reference>
<reference key="12">
    <citation type="journal article" date="1993" name="J. Biol. Chem.">
        <title>Evidence for involvement of furin in cleavage and activation of diphtheria toxin.</title>
        <authorList>
            <person name="Tsuneoka M."/>
            <person name="Nakayama K."/>
            <person name="Hatsuzawa K."/>
            <person name="Komada M."/>
            <person name="Kitamura N."/>
            <person name="Mekada E."/>
        </authorList>
    </citation>
    <scope>FUNCTION (MICROBIAL INFECTION)</scope>
</reference>
<reference key="13">
    <citation type="journal article" date="1995" name="J. Biol. Chem.">
        <title>Processing of transforming growth factor beta 1 precursor by human furin convertase.</title>
        <authorList>
            <person name="Dubois C.M."/>
            <person name="Laprise M.H."/>
            <person name="Blanchette F."/>
            <person name="Gentry L.E."/>
            <person name="Leduc R."/>
        </authorList>
    </citation>
    <scope>FUNCTION</scope>
    <scope>CATALYTIC ACTIVITY</scope>
</reference>
<reference key="14">
    <citation type="journal article" date="2014" name="J. Proteomics">
        <title>An enzyme assisted RP-RPLC approach for in-depth analysis of human liver phosphoproteome.</title>
        <authorList>
            <person name="Bian Y."/>
            <person name="Song C."/>
            <person name="Cheng K."/>
            <person name="Dong M."/>
            <person name="Wang F."/>
            <person name="Huang J."/>
            <person name="Sun D."/>
            <person name="Wang L."/>
            <person name="Ye M."/>
            <person name="Zou H."/>
        </authorList>
    </citation>
    <scope>IDENTIFICATION BY MASS SPECTROMETRY [LARGE SCALE ANALYSIS]</scope>
    <source>
        <tissue>Liver</tissue>
    </source>
</reference>
<reference key="15">
    <citation type="journal article" date="2019" name="Cell Rep.">
        <title>Guanylate-binding proteins 2 and 5 exert broad antiviral activity by inhibiting furin-mediated processing of viral envelope proteins.</title>
        <authorList>
            <person name="Braun E."/>
            <person name="Hotter D."/>
            <person name="Koepke L."/>
            <person name="Zech F."/>
            <person name="Gross R."/>
            <person name="Sparrer K.M.J."/>
            <person name="Mueller J.A."/>
            <person name="Pfaller C.K."/>
            <person name="Heusinger E."/>
            <person name="Wombacher R."/>
            <person name="Sutter K."/>
            <person name="Dittmer U."/>
            <person name="Winkler M."/>
            <person name="Simmons G."/>
            <person name="Jakobsen M.R."/>
            <person name="Conzelmann K.K."/>
            <person name="Poehlmann S."/>
            <person name="Muench J."/>
            <person name="Fackler O.T."/>
            <person name="Kirchhoff F."/>
            <person name="Sauter D."/>
        </authorList>
    </citation>
    <scope>FUNCTION (MICROBIAL INFECTION)</scope>
    <scope>CATALYTIC ACTIVITY</scope>
</reference>
<reference key="16">
    <citation type="journal article" date="1994" name="Eur. J. Biochem.">
        <title>Homology modelling of the catalytic domain of human furin. A model for the eukaryotic subtilisin-like proprotein convertases.</title>
        <authorList>
            <person name="Siezen R.J."/>
            <person name="Creemers J.W.M."/>
            <person name="van de Ven W.J.M."/>
        </authorList>
    </citation>
    <scope>3D-STRUCTURE MODELING OF CATALYTIC DOMAIN</scope>
</reference>
<reference key="17">
    <citation type="journal article" date="1995" name="EMBO J.">
        <title>Intracellular trafficking of furin is modulated by the phosphorylation state of a casein kinase II site in its cytoplasmic tail.</title>
        <authorList>
            <person name="Jones B.G."/>
            <person name="Thomas L."/>
            <person name="Molloy S.S."/>
            <person name="Thulin C.D."/>
            <person name="Fry M.D."/>
            <person name="Walsh K.A."/>
            <person name="Thomas G."/>
        </authorList>
    </citation>
    <scope>SUBCELLULAR LOCATION</scope>
    <scope>PHOSPHORYLATION AT SER-773 AND SER-775</scope>
    <scope>MOTIF</scope>
    <scope>MUTAGENESIS OF SER-773 AND SER-775</scope>
</reference>
<reference key="18">
    <citation type="journal article" date="1997" name="EMBO J.">
        <title>Activation of the furin endoprotease is a multiple-step process: requirements for acidification and internal propeptide cleavage.</title>
        <authorList>
            <person name="Anderson E.D."/>
            <person name="VanSlyke J.K."/>
            <person name="Thulin C.D."/>
            <person name="Jean F."/>
            <person name="Thomas G."/>
        </authorList>
    </citation>
    <scope>FUNCTION</scope>
    <scope>CATALYTIC ACTIVITY</scope>
    <scope>COFACTOR</scope>
    <scope>ACTIVITY REGULATION</scope>
    <scope>BIOPHYSICOCHEMICAL PROPERTIES</scope>
    <scope>SUBCELLULAR LOCATION</scope>
    <scope>PROTEOLYTIC CLEAVAGE</scope>
    <scope>IDENTIFICATION BY MASS SPECTROMETRY</scope>
    <scope>MUTAGENESIS OF ASP-153</scope>
</reference>
<reference key="19">
    <citation type="journal article" date="1997" name="J. Cell Biol.">
        <title>Cytoskeletal protein ABP-280 directs the intracellular trafficking of furin and modulates proprotein processing in the endocytic pathway.</title>
        <authorList>
            <person name="Liu G."/>
            <person name="Thomas L."/>
            <person name="Warren R.A."/>
            <person name="Enns C.A."/>
            <person name="Cunningham C.C."/>
            <person name="Hartwig J.H."/>
            <person name="Thomas G."/>
        </authorList>
    </citation>
    <scope>SUBCELLULAR LOCATION</scope>
</reference>
<reference key="20">
    <citation type="journal article" date="2001" name="EMBO J.">
        <title>PACS-1 binding to adaptors is required for acidic cluster motif-mediated protein traffic.</title>
        <authorList>
            <person name="Crump C.M."/>
            <person name="Xiang Y."/>
            <person name="Thomas L."/>
            <person name="Gu F."/>
            <person name="Austin C."/>
            <person name="Tooze S.A."/>
            <person name="Thomas G."/>
        </authorList>
    </citation>
    <scope>INTERACTION WITH PACS1</scope>
    <scope>SUBCELLULAR LOCATION</scope>
</reference>
<reference key="21">
    <citation type="journal article" date="2002" name="J. Biol. Chem.">
        <title>The ordered and compartment-specfific autoproteolytic removal of the furin intramolecular chaperone is required for enzyme activation.</title>
        <authorList>
            <person name="Anderson E.D."/>
            <person name="Molloy S.S."/>
            <person name="Jean F."/>
            <person name="Fei H."/>
            <person name="Shimamura S."/>
            <person name="Thomas G."/>
        </authorList>
    </citation>
    <scope>FUNCTION</scope>
    <scope>CATALYTIC ACTIVITY</scope>
    <scope>ACTIVITY REGULATION</scope>
    <scope>SUBCELLULAR LOCATION</scope>
    <scope>MUTAGENESIS OF VAL-72; ARG-75 AND ASP-153</scope>
</reference>
<reference key="22">
    <citation type="journal article" date="2010" name="Clin. Chem.">
        <title>Processing of pro-B-type natriuretic peptide: furin and corin as candidate convertases.</title>
        <authorList>
            <person name="Semenov A.G."/>
            <person name="Tamm N.N."/>
            <person name="Seferian K.R."/>
            <person name="Postnikov A.B."/>
            <person name="Karpova N.S."/>
            <person name="Serebryanaya D.V."/>
            <person name="Koshkina E.V."/>
            <person name="Krasnoselsky M.I."/>
            <person name="Katrukha A.G."/>
        </authorList>
    </citation>
    <scope>FUNCTION</scope>
</reference>
<reference key="23">
    <citation type="journal article" date="2011" name="Biochem. Biophys. Res. Commun.">
        <title>Glycosylation and processing of pro-B-type natriuretic peptide in cardiomyocytes.</title>
        <authorList>
            <person name="Peng J."/>
            <person name="Jiang J."/>
            <person name="Wang W."/>
            <person name="Qi X."/>
            <person name="Sun X.L."/>
            <person name="Wu Q."/>
        </authorList>
    </citation>
    <scope>FUNCTION</scope>
</reference>
<reference key="24">
    <citation type="journal article" date="2016" name="Sci. Rep.">
        <title>The BR domain of PsrP interacts with extracellular DNA to promote bacterial aggregation; structural insights into pneumococcal biofilm formation.</title>
        <authorList>
            <person name="Schulte T."/>
            <person name="Mikaelsson C."/>
            <person name="Beaussart A."/>
            <person name="Kikhney A."/>
            <person name="Deshmukh M."/>
            <person name="Wolniak S."/>
            <person name="Pathak A."/>
            <person name="Ebel C."/>
            <person name="Lofling J."/>
            <person name="Fogolari F."/>
            <person name="Henriques-Normark B."/>
            <person name="Dufrene Y.F."/>
            <person name="Svergun D."/>
            <person name="Nygren P.A."/>
            <person name="Achour A."/>
        </authorList>
    </citation>
    <scope>FUNCTION (MICROBIAL INFECTION)</scope>
</reference>
<reference key="25">
    <citation type="journal article" date="2020" name="Life. Sci Alliance">
        <title>TMPRSS2 and furin are both essential for proteolytic activation of SARS-CoV-2 in human airway cells.</title>
        <authorList>
            <person name="Bestle D."/>
            <person name="Heindl M.R."/>
            <person name="Limburg H."/>
            <person name="Van Lam van T."/>
            <person name="Pilgram O."/>
            <person name="Moulton H."/>
            <person name="Stein D.A."/>
            <person name="Hardes K."/>
            <person name="Eickmann M."/>
            <person name="Dolnik O."/>
            <person name="Rohde C."/>
            <person name="Klenk H.D."/>
            <person name="Garten W."/>
            <person name="Steinmetzer T."/>
            <person name="Boettcher-Friebertshaeuser E."/>
        </authorList>
    </citation>
    <scope>FUNCTION (MICROBIAL INFECTION)</scope>
    <scope>CATALYTIC ACTIVITY</scope>
</reference>
<reference key="26">
    <citation type="journal article" date="2020" name="Mol. Cell">
        <title>A multibasic cleavage site in the Spike protein of SARS-CoV-2 is essential for infection of human lung cells.</title>
        <authorList>
            <person name="Hoffmann M."/>
            <person name="Kleine-Weber H."/>
            <person name="Poehlmann S."/>
        </authorList>
    </citation>
    <scope>FUNCTION (MICROBIAL INFECTION)</scope>
    <scope>ACTIVITY REGULATION</scope>
    <scope>CATALYTIC ACTIVITY</scope>
</reference>
<reference key="27">
    <citation type="journal article" date="2020" name="J. Virol.">
        <title>Lysosome-Associated Membrane Proteins Support the Furin-Mediated Processing of the Mumps Virus Fusion Protein.</title>
        <authorList>
            <person name="Ueo A."/>
            <person name="Kubota M."/>
            <person name="Shirogane Y."/>
            <person name="Ohno S."/>
            <person name="Hashiguchi T."/>
            <person name="Yanagi Y."/>
        </authorList>
    </citation>
    <scope>FUNCTION (MICROBIAL INFECTION)</scope>
    <scope>INTERACTION WITH LAMP1; LAMP2 AND LAMP3</scope>
</reference>
<reference key="28">
    <citation type="journal article" date="2021" name="Glycoconj. J.">
        <title>Structural characteristics of Heparan sulfate required for the binding with the virus processing Enzyme Furin.</title>
        <authorList>
            <person name="Zeng J."/>
            <person name="Meng Y."/>
            <person name="Chen S.Y."/>
            <person name="Zhao G."/>
            <person name="Wang L."/>
            <person name="Zhang E.X."/>
            <person name="Qiu H."/>
        </authorList>
    </citation>
    <scope>ACTIVITY REGULATION</scope>
</reference>
<reference evidence="39 40" key="29">
    <citation type="journal article" date="2014" name="ACS Chem. Biol.">
        <title>X-ray structures of human furin in complex with competitive inhibitors.</title>
        <authorList>
            <person name="Dahms S.O."/>
            <person name="Hardes K."/>
            <person name="Becker G.L."/>
            <person name="Steinmetzer T."/>
            <person name="Brandstetter H."/>
            <person name="Than M.E."/>
        </authorList>
    </citation>
    <scope>X-RAY CRYSTALLOGRAPHY (2.30 ANGSTROMS) OF 108-574 IN COMPLEX WITH CALCIUM AND INHIBITOR</scope>
    <scope>FUNCTION</scope>
    <scope>CATALYTIC ACTIVITY</scope>
    <scope>ACTIVITY REGULATION</scope>
    <scope>DISULFIDE BONDS</scope>
</reference>
<reference evidence="41" key="30">
    <citation type="journal article" date="2015" name="ChemMedChem">
        <title>Novel Furin inhibitors with potent anti-infectious activity.</title>
        <authorList>
            <person name="Hardes K."/>
            <person name="Becker G.L."/>
            <person name="Lu Y."/>
            <person name="Dahms S.O."/>
            <person name="Kohler S."/>
            <person name="Beyer W."/>
            <person name="Sandvig K."/>
            <person name="Yamamoto H."/>
            <person name="Lindberg I."/>
            <person name="Walz L."/>
            <person name="von Messling V."/>
            <person name="Than M.E."/>
            <person name="Garten W."/>
            <person name="Steinmetzer T."/>
        </authorList>
    </citation>
    <scope>X-RAY CRYSTALLOGRAPHY (2.15 ANGSTROMS) OF 108-574 IN COMPLEX WITH CALCIUM AND INHIBITOR</scope>
    <scope>FUNCTION</scope>
    <scope>CATALYTIC ACTIVITY</scope>
    <scope>ACTIVITY REGULATION</scope>
    <scope>DISULFIDE BONDS</scope>
</reference>
<reference key="31">
    <citation type="journal article" date="2020" name="Genes (Basel)">
        <title>COVID-19 and Genetic Variants of Protein Involved in the SARS-CoV-2 Entry into the Host Cells.</title>
        <authorList>
            <person name="Latini A."/>
            <person name="Agolini E."/>
            <person name="Novelli A."/>
            <person name="Borgiani P."/>
            <person name="Giannini R."/>
            <person name="Gravina P."/>
            <person name="Smarrazzo A."/>
            <person name="Dauri M."/>
            <person name="Andreoni M."/>
            <person name="Rogliani P."/>
            <person name="Bernardini S."/>
            <person name="Helmer-Citterich M."/>
            <person name="Biancolella M."/>
            <person name="Novelli G."/>
        </authorList>
    </citation>
    <scope>VARIANTS VAL-43; SER-146; GLN-298 AND VAL-636</scope>
</reference>
<feature type="signal peptide" evidence="2">
    <location>
        <begin position="1"/>
        <end position="26"/>
    </location>
</feature>
<feature type="propeptide" id="PRO_0000027028" description="Inhibition peptide" evidence="29">
    <location>
        <begin position="27"/>
        <end position="107"/>
    </location>
</feature>
<feature type="chain" id="PRO_0000027029" description="Furin">
    <location>
        <begin position="108"/>
        <end position="794"/>
    </location>
</feature>
<feature type="topological domain" description="Lumenal" evidence="34">
    <location>
        <begin position="108"/>
        <end position="715"/>
    </location>
</feature>
<feature type="transmembrane region" description="Helical" evidence="2">
    <location>
        <begin position="716"/>
        <end position="738"/>
    </location>
</feature>
<feature type="topological domain" description="Cytoplasmic" evidence="34">
    <location>
        <begin position="739"/>
        <end position="794"/>
    </location>
</feature>
<feature type="domain" description="Peptidase S8" evidence="4">
    <location>
        <begin position="121"/>
        <end position="435"/>
    </location>
</feature>
<feature type="domain" description="P/Homo B" evidence="3">
    <location>
        <begin position="444"/>
        <end position="576"/>
    </location>
</feature>
<feature type="repeat" description="FU 1" evidence="2">
    <location>
        <begin position="577"/>
        <end position="620"/>
    </location>
</feature>
<feature type="repeat" description="FU 2" evidence="2">
    <location>
        <begin position="638"/>
        <end position="681"/>
    </location>
</feature>
<feature type="region of interest" description="Disordered" evidence="5">
    <location>
        <begin position="162"/>
        <end position="183"/>
    </location>
</feature>
<feature type="region of interest" description="Disordered" evidence="5">
    <location>
        <begin position="673"/>
        <end position="696"/>
    </location>
</feature>
<feature type="region of interest" description="Cell surface signal" evidence="33">
    <location>
        <begin position="759"/>
        <end position="762"/>
    </location>
</feature>
<feature type="region of interest" description="Disordered" evidence="5">
    <location>
        <begin position="767"/>
        <end position="794"/>
    </location>
</feature>
<feature type="short sequence motif" description="Cell attachment site" evidence="2">
    <location>
        <begin position="498"/>
        <end position="500"/>
    </location>
</feature>
<feature type="short sequence motif" description="Trans Golgi network signal" evidence="28">
    <location>
        <begin position="773"/>
        <end position="779"/>
    </location>
</feature>
<feature type="compositionally biased region" description="Low complexity" evidence="5">
    <location>
        <begin position="676"/>
        <end position="687"/>
    </location>
</feature>
<feature type="compositionally biased region" description="Acidic residues" evidence="5">
    <location>
        <begin position="767"/>
        <end position="780"/>
    </location>
</feature>
<feature type="active site" description="Charge relay system" evidence="4">
    <location>
        <position position="153"/>
    </location>
</feature>
<feature type="active site" description="Charge relay system" evidence="4">
    <location>
        <position position="194"/>
    </location>
</feature>
<feature type="active site" description="Charge relay system" evidence="4">
    <location>
        <position position="368"/>
    </location>
</feature>
<feature type="binding site" evidence="16 17 39 40 41">
    <location>
        <position position="115"/>
    </location>
    <ligand>
        <name>Ca(2+)</name>
        <dbReference type="ChEBI" id="CHEBI:29108"/>
        <label>1</label>
    </ligand>
</feature>
<feature type="binding site" evidence="36 37 39 40 41">
    <location>
        <position position="154"/>
    </location>
    <ligand>
        <name>substrate</name>
    </ligand>
</feature>
<feature type="binding site" evidence="16 17 39 40 41">
    <location>
        <position position="162"/>
    </location>
    <ligand>
        <name>Ca(2+)</name>
        <dbReference type="ChEBI" id="CHEBI:29108"/>
        <label>1</label>
    </ligand>
</feature>
<feature type="binding site" evidence="16 17 39 40 41">
    <location>
        <position position="174"/>
    </location>
    <ligand>
        <name>Ca(2+)</name>
        <dbReference type="ChEBI" id="CHEBI:29108"/>
        <label>2</label>
    </ligand>
</feature>
<feature type="binding site" evidence="16 17 39 40 41">
    <location>
        <position position="179"/>
    </location>
    <ligand>
        <name>Ca(2+)</name>
        <dbReference type="ChEBI" id="CHEBI:29108"/>
        <label>2</label>
    </ligand>
</feature>
<feature type="binding site" evidence="16 17 39 40 41">
    <location>
        <position position="181"/>
    </location>
    <ligand>
        <name>Ca(2+)</name>
        <dbReference type="ChEBI" id="CHEBI:29108"/>
        <label>2</label>
    </ligand>
</feature>
<feature type="binding site" evidence="36 37 39 40 41">
    <location>
        <begin position="191"/>
        <end position="192"/>
    </location>
    <ligand>
        <name>substrate</name>
    </ligand>
</feature>
<feature type="binding site" evidence="16 17 39 40 41">
    <location>
        <position position="205"/>
    </location>
    <ligand>
        <name>Ca(2+)</name>
        <dbReference type="ChEBI" id="CHEBI:29108"/>
        <label>1</label>
    </ligand>
</feature>
<feature type="binding site" evidence="16 17 39 40 41">
    <location>
        <position position="208"/>
    </location>
    <ligand>
        <name>Ca(2+)</name>
        <dbReference type="ChEBI" id="CHEBI:29108"/>
        <label>1</label>
    </ligand>
</feature>
<feature type="binding site" evidence="16 17 39 40 41">
    <location>
        <position position="210"/>
    </location>
    <ligand>
        <name>Ca(2+)</name>
        <dbReference type="ChEBI" id="CHEBI:29108"/>
        <label>1</label>
    </ligand>
</feature>
<feature type="binding site" evidence="16 17 39 40 41">
    <location>
        <position position="212"/>
    </location>
    <ligand>
        <name>Ca(2+)</name>
        <dbReference type="ChEBI" id="CHEBI:29108"/>
        <label>1</label>
    </ligand>
</feature>
<feature type="binding site" evidence="36 37 39 40 41">
    <location>
        <position position="236"/>
    </location>
    <ligand>
        <name>substrate</name>
    </ligand>
</feature>
<feature type="binding site" evidence="36 37 39 40 41">
    <location>
        <begin position="253"/>
        <end position="258"/>
    </location>
    <ligand>
        <name>substrate</name>
    </ligand>
</feature>
<feature type="binding site" evidence="16 17 39 40 41">
    <location>
        <position position="258"/>
    </location>
    <ligand>
        <name>Ca(2+)</name>
        <dbReference type="ChEBI" id="CHEBI:29108"/>
        <label>3</label>
    </ligand>
</feature>
<feature type="binding site" evidence="36 37 39 40 41">
    <location>
        <position position="264"/>
    </location>
    <ligand>
        <name>substrate</name>
    </ligand>
</feature>
<feature type="binding site" evidence="36 37 39 40 41">
    <location>
        <begin position="292"/>
        <end position="295"/>
    </location>
    <ligand>
        <name>substrate</name>
    </ligand>
</feature>
<feature type="binding site" evidence="16 17 39 40 41">
    <location>
        <position position="301"/>
    </location>
    <ligand>
        <name>Ca(2+)</name>
        <dbReference type="ChEBI" id="CHEBI:29108"/>
        <label>3</label>
    </ligand>
</feature>
<feature type="binding site" evidence="36 37 39 40 41">
    <location>
        <position position="306"/>
    </location>
    <ligand>
        <name>substrate</name>
    </ligand>
</feature>
<feature type="binding site" evidence="36 37 39 40 41">
    <location>
        <position position="308"/>
    </location>
    <ligand>
        <name>substrate</name>
    </ligand>
</feature>
<feature type="binding site" evidence="16 17 39 40 41">
    <location>
        <position position="331"/>
    </location>
    <ligand>
        <name>Ca(2+)</name>
        <dbReference type="ChEBI" id="CHEBI:29108"/>
        <label>3</label>
    </ligand>
</feature>
<feature type="binding site" evidence="36 37 39 40 41">
    <location>
        <position position="368"/>
    </location>
    <ligand>
        <name>substrate</name>
    </ligand>
</feature>
<feature type="site" description="Cleavage, second; by autolysis" evidence="29">
    <location>
        <begin position="75"/>
        <end position="76"/>
    </location>
</feature>
<feature type="site" description="Cleavage, first; by autolysis" evidence="9 29">
    <location>
        <begin position="107"/>
        <end position="108"/>
    </location>
</feature>
<feature type="modified residue" description="Phosphoserine; by CK2" evidence="28">
    <location>
        <position position="773"/>
    </location>
</feature>
<feature type="modified residue" description="Phosphoserine; by CK2" evidence="28">
    <location>
        <position position="775"/>
    </location>
</feature>
<feature type="glycosylation site" description="N-linked (GlcNAc...) asparagine" evidence="2">
    <location>
        <position position="387"/>
    </location>
</feature>
<feature type="glycosylation site" description="N-linked (GlcNAc...) asparagine" evidence="2">
    <location>
        <position position="440"/>
    </location>
</feature>
<feature type="glycosylation site" description="N-linked (GlcNAc...) asparagine" evidence="2">
    <location>
        <position position="553"/>
    </location>
</feature>
<feature type="disulfide bond" evidence="16 17">
    <location>
        <begin position="211"/>
        <end position="360"/>
    </location>
</feature>
<feature type="disulfide bond" evidence="16 17">
    <location>
        <begin position="303"/>
        <end position="333"/>
    </location>
</feature>
<feature type="disulfide bond" evidence="16 17">
    <location>
        <begin position="450"/>
        <end position="474"/>
    </location>
</feature>
<feature type="sequence variant" id="VAR_051821" description="In dbSNP:rs16944971." evidence="23">
    <original>A</original>
    <variation>V</variation>
    <location>
        <position position="43"/>
    </location>
</feature>
<feature type="sequence variant" id="VAR_084542" evidence="23">
    <original>G</original>
    <variation>S</variation>
    <location>
        <position position="146"/>
    </location>
</feature>
<feature type="sequence variant" id="VAR_084543" evidence="23">
    <original>R</original>
    <variation>Q</variation>
    <location>
        <position position="298"/>
    </location>
</feature>
<feature type="sequence variant" id="VAR_055343" description="In cell line LoVo; does not undergo autocatalytic activation and is not transported to the Golgi apparatus." evidence="24">
    <original>W</original>
    <variation>R</variation>
    <location>
        <position position="547"/>
    </location>
</feature>
<feature type="sequence variant" id="VAR_084544" evidence="23">
    <original>I</original>
    <variation>V</variation>
    <location>
        <position position="636"/>
    </location>
</feature>
<feature type="mutagenesis site" description="Loss of catalytic activity and propeptide second cleavage and removal. Abnormal accumulation in the early secretory pathway." evidence="7">
    <original>V</original>
    <variation>R</variation>
    <location>
        <position position="72"/>
    </location>
</feature>
<feature type="mutagenesis site" description="Loss of catalytic activity and, propeptide second cleavage and removal. Normal trafficking to the Golgi." evidence="7">
    <original>R</original>
    <variation>A</variation>
    <location>
        <position position="75"/>
    </location>
</feature>
<feature type="mutagenesis site" description="Loss of catalytic activity and propeptide first cleavage. Abnormal accumulation in the early secretory pathway." evidence="7 29">
    <original>D</original>
    <variation>N</variation>
    <location>
        <position position="153"/>
    </location>
</feature>
<feature type="mutagenesis site" description="Phosphomimetic mutant. Localization in early endosome is increased." evidence="28">
    <original>SDS</original>
    <variation>DDD</variation>
    <location>
        <begin position="773"/>
        <end position="775"/>
    </location>
</feature>
<feature type="mutagenesis site" description="Slight reduction in phosphorylation. Loss of phosphorylation and abnormal accumulation in the early secretory pathway; when associated with A-775." evidence="28">
    <original>S</original>
    <variation>A</variation>
    <location>
        <position position="773"/>
    </location>
</feature>
<feature type="mutagenesis site" description="Slight reduction in phosphorylation. Loss of phosphorylation and abnormal accumulation in the early secretory pathway; when associated with A-773." evidence="28">
    <original>S</original>
    <variation>A</variation>
    <location>
        <position position="775"/>
    </location>
</feature>
<feature type="helix" evidence="42">
    <location>
        <begin position="66"/>
        <end position="68"/>
    </location>
</feature>
<feature type="helix" evidence="42">
    <location>
        <begin position="73"/>
        <end position="77"/>
    </location>
</feature>
<feature type="strand" evidence="42">
    <location>
        <begin position="78"/>
        <end position="80"/>
    </location>
</feature>
<feature type="turn" evidence="42">
    <location>
        <begin position="82"/>
        <end position="84"/>
    </location>
</feature>
<feature type="helix" evidence="42">
    <location>
        <begin position="85"/>
        <end position="88"/>
    </location>
</feature>
<feature type="helix" evidence="43">
    <location>
        <begin position="118"/>
        <end position="120"/>
    </location>
</feature>
<feature type="helix" evidence="43">
    <location>
        <begin position="122"/>
        <end position="125"/>
    </location>
</feature>
<feature type="strand" evidence="43">
    <location>
        <begin position="127"/>
        <end position="129"/>
    </location>
</feature>
<feature type="helix" evidence="43">
    <location>
        <begin position="134"/>
        <end position="139"/>
    </location>
</feature>
<feature type="strand" evidence="43">
    <location>
        <begin position="148"/>
        <end position="154"/>
    </location>
</feature>
<feature type="turn" evidence="43">
    <location>
        <begin position="161"/>
        <end position="163"/>
    </location>
</feature>
<feature type="helix" evidence="43">
    <location>
        <begin position="164"/>
        <end position="166"/>
    </location>
</feature>
<feature type="helix" evidence="43">
    <location>
        <begin position="169"/>
        <end position="171"/>
    </location>
</feature>
<feature type="turn" evidence="43">
    <location>
        <begin position="175"/>
        <end position="178"/>
    </location>
</feature>
<feature type="helix" evidence="44">
    <location>
        <begin position="191"/>
        <end position="193"/>
    </location>
</feature>
<feature type="helix" evidence="43">
    <location>
        <begin position="194"/>
        <end position="203"/>
    </location>
</feature>
<feature type="strand" evidence="43">
    <location>
        <begin position="206"/>
        <end position="211"/>
    </location>
</feature>
<feature type="turn" evidence="43">
    <location>
        <begin position="215"/>
        <end position="218"/>
    </location>
</feature>
<feature type="strand" evidence="43">
    <location>
        <begin position="219"/>
        <end position="225"/>
    </location>
</feature>
<feature type="strand" evidence="43">
    <location>
        <begin position="227"/>
        <end position="229"/>
    </location>
</feature>
<feature type="helix" evidence="43">
    <location>
        <begin position="233"/>
        <end position="240"/>
    </location>
</feature>
<feature type="turn" evidence="43">
    <location>
        <begin position="244"/>
        <end position="246"/>
    </location>
</feature>
<feature type="strand" evidence="43">
    <location>
        <begin position="249"/>
        <end position="252"/>
    </location>
</feature>
<feature type="strand" evidence="43">
    <location>
        <begin position="259"/>
        <end position="261"/>
    </location>
</feature>
<feature type="helix" evidence="43">
    <location>
        <begin position="268"/>
        <end position="280"/>
    </location>
</feature>
<feature type="helix" evidence="43">
    <location>
        <begin position="282"/>
        <end position="284"/>
    </location>
</feature>
<feature type="strand" evidence="43">
    <location>
        <begin position="288"/>
        <end position="292"/>
    </location>
</feature>
<feature type="helix" evidence="43">
    <location>
        <begin position="297"/>
        <end position="299"/>
    </location>
</feature>
<feature type="helix" evidence="43">
    <location>
        <begin position="303"/>
        <end position="305"/>
    </location>
</feature>
<feature type="turn" evidence="43">
    <location>
        <begin position="307"/>
        <end position="310"/>
    </location>
</feature>
<feature type="strand" evidence="43">
    <location>
        <begin position="314"/>
        <end position="320"/>
    </location>
</feature>
<feature type="strand" evidence="43">
    <location>
        <begin position="338"/>
        <end position="341"/>
    </location>
</feature>
<feature type="strand" evidence="43">
    <location>
        <begin position="351"/>
        <end position="355"/>
    </location>
</feature>
<feature type="turn" evidence="43">
    <location>
        <begin position="356"/>
        <end position="358"/>
    </location>
</feature>
<feature type="strand" evidence="43">
    <location>
        <begin position="359"/>
        <end position="364"/>
    </location>
</feature>
<feature type="helix" evidence="43">
    <location>
        <begin position="367"/>
        <end position="369"/>
    </location>
</feature>
<feature type="helix" evidence="43">
    <location>
        <begin position="370"/>
        <end position="384"/>
    </location>
</feature>
<feature type="helix" evidence="43">
    <location>
        <begin position="390"/>
        <end position="400"/>
    </location>
</feature>
<feature type="strand" evidence="43">
    <location>
        <begin position="419"/>
        <end position="421"/>
    </location>
</feature>
<feature type="turn" evidence="43">
    <location>
        <begin position="422"/>
        <end position="424"/>
    </location>
</feature>
<feature type="helix" evidence="43">
    <location>
        <begin position="431"/>
        <end position="438"/>
    </location>
</feature>
<feature type="strand" evidence="43">
    <location>
        <begin position="448"/>
        <end position="453"/>
    </location>
</feature>
<feature type="strand" evidence="43">
    <location>
        <begin position="464"/>
        <end position="471"/>
    </location>
</feature>
<feature type="turn" evidence="43">
    <location>
        <begin position="473"/>
        <end position="476"/>
    </location>
</feature>
<feature type="strand" evidence="43">
    <location>
        <begin position="482"/>
        <end position="496"/>
    </location>
</feature>
<feature type="helix" evidence="43">
    <location>
        <begin position="498"/>
        <end position="500"/>
    </location>
</feature>
<feature type="strand" evidence="43">
    <location>
        <begin position="501"/>
        <end position="506"/>
    </location>
</feature>
<feature type="strand" evidence="43">
    <location>
        <begin position="512"/>
        <end position="516"/>
    </location>
</feature>
<feature type="strand" evidence="43">
    <location>
        <begin position="528"/>
        <end position="535"/>
    </location>
</feature>
<feature type="turn" evidence="43">
    <location>
        <begin position="537"/>
        <end position="540"/>
    </location>
</feature>
<feature type="strand" evidence="43">
    <location>
        <begin position="545"/>
        <end position="553"/>
    </location>
</feature>
<feature type="strand" evidence="43">
    <location>
        <begin position="555"/>
        <end position="557"/>
    </location>
</feature>
<feature type="strand" evidence="43">
    <location>
        <begin position="561"/>
        <end position="573"/>
    </location>
</feature>
<evidence type="ECO:0000250" key="1">
    <source>
        <dbReference type="UniProtKB" id="P23188"/>
    </source>
</evidence>
<evidence type="ECO:0000255" key="2"/>
<evidence type="ECO:0000255" key="3">
    <source>
        <dbReference type="PROSITE-ProRule" id="PRU01173"/>
    </source>
</evidence>
<evidence type="ECO:0000255" key="4">
    <source>
        <dbReference type="PROSITE-ProRule" id="PRU01240"/>
    </source>
</evidence>
<evidence type="ECO:0000256" key="5">
    <source>
        <dbReference type="SAM" id="MobiDB-lite"/>
    </source>
</evidence>
<evidence type="ECO:0000269" key="6">
    <source>
    </source>
</evidence>
<evidence type="ECO:0000269" key="7">
    <source>
    </source>
</evidence>
<evidence type="ECO:0000269" key="8">
    <source>
    </source>
</evidence>
<evidence type="ECO:0000269" key="9">
    <source>
    </source>
</evidence>
<evidence type="ECO:0000269" key="10">
    <source>
    </source>
</evidence>
<evidence type="ECO:0000269" key="11">
    <source>
    </source>
</evidence>
<evidence type="ECO:0000269" key="12">
    <source>
    </source>
</evidence>
<evidence type="ECO:0000269" key="13">
    <source>
    </source>
</evidence>
<evidence type="ECO:0000269" key="14">
    <source>
    </source>
</evidence>
<evidence type="ECO:0000269" key="15">
    <source>
    </source>
</evidence>
<evidence type="ECO:0000269" key="16">
    <source>
    </source>
</evidence>
<evidence type="ECO:0000269" key="17">
    <source>
    </source>
</evidence>
<evidence type="ECO:0000269" key="18">
    <source>
    </source>
</evidence>
<evidence type="ECO:0000269" key="19">
    <source>
    </source>
</evidence>
<evidence type="ECO:0000269" key="20">
    <source>
    </source>
</evidence>
<evidence type="ECO:0000269" key="21">
    <source>
    </source>
</evidence>
<evidence type="ECO:0000269" key="22">
    <source>
    </source>
</evidence>
<evidence type="ECO:0000269" key="23">
    <source>
    </source>
</evidence>
<evidence type="ECO:0000269" key="24">
    <source>
    </source>
</evidence>
<evidence type="ECO:0000269" key="25">
    <source>
    </source>
</evidence>
<evidence type="ECO:0000269" key="26">
    <source>
    </source>
</evidence>
<evidence type="ECO:0000269" key="27">
    <source>
    </source>
</evidence>
<evidence type="ECO:0000269" key="28">
    <source>
    </source>
</evidence>
<evidence type="ECO:0000269" key="29">
    <source>
    </source>
</evidence>
<evidence type="ECO:0000269" key="30">
    <source>
    </source>
</evidence>
<evidence type="ECO:0000303" key="31">
    <source>
    </source>
</evidence>
<evidence type="ECO:0000303" key="32">
    <source>
    </source>
</evidence>
<evidence type="ECO:0000303" key="33">
    <source>
    </source>
</evidence>
<evidence type="ECO:0000305" key="34"/>
<evidence type="ECO:0000305" key="35">
    <source>
    </source>
</evidence>
<evidence type="ECO:0000305" key="36">
    <source>
    </source>
</evidence>
<evidence type="ECO:0000305" key="37">
    <source>
    </source>
</evidence>
<evidence type="ECO:0000312" key="38">
    <source>
        <dbReference type="HGNC" id="HGNC:8568"/>
    </source>
</evidence>
<evidence type="ECO:0007744" key="39">
    <source>
        <dbReference type="PDB" id="4OMC"/>
    </source>
</evidence>
<evidence type="ECO:0007744" key="40">
    <source>
        <dbReference type="PDB" id="4OMD"/>
    </source>
</evidence>
<evidence type="ECO:0007744" key="41">
    <source>
        <dbReference type="PDB" id="4RYD"/>
    </source>
</evidence>
<evidence type="ECO:0007829" key="42">
    <source>
        <dbReference type="PDB" id="6A8Y"/>
    </source>
</evidence>
<evidence type="ECO:0007829" key="43">
    <source>
        <dbReference type="PDB" id="7LCU"/>
    </source>
</evidence>
<evidence type="ECO:0007829" key="44">
    <source>
        <dbReference type="PDB" id="8B4V"/>
    </source>
</evidence>
<accession>P09958</accession>
<accession>Q14336</accession>
<accession>Q6LBS3</accession>
<accession>Q9UCZ5</accession>
<gene>
    <name evidence="32 38" type="primary">FURIN</name>
    <name evidence="31" type="synonym">FUR</name>
    <name type="synonym">PACE</name>
    <name type="synonym">PCSK3</name>
</gene>
<protein>
    <recommendedName>
        <fullName evidence="32">Furin</fullName>
        <ecNumber evidence="7 9 11 14 17 24 25 29">3.4.21.75</ecNumber>
    </recommendedName>
    <alternativeName>
        <fullName>Dibasic-processing enzyme</fullName>
    </alternativeName>
    <alternativeName>
        <fullName>Paired basic amino acid residue-cleaving enzyme</fullName>
        <shortName>PACE</shortName>
    </alternativeName>
</protein>
<comment type="function">
    <text evidence="1 7 9 11 12 13 14 16 17 24 25 26 29">Ubiquitous endoprotease within constitutive secretory pathways capable of cleavage at the RX(K/R)R consensus motif (PubMed:11799113, PubMed:1629222, PubMed:1713771, PubMed:2251280, PubMed:24666235, PubMed:25974265, PubMed:7592877, PubMed:7690548, PubMed:9130696). Mediates processing of TGFB1, an essential step in TGF-beta-1 activation (PubMed:7737999). Converts through proteolytic cleavage the non-functional Brain natriuretic factor prohormone into its active hormone BNP(1-32) (PubMed:20489134, PubMed:21763278). By mediating processing of accessory subunit ATP6AP1/Ac45 of the V-ATPase, regulates the acidification of dense-core secretory granules in islets of Langerhans cells (By similarity).</text>
</comment>
<comment type="function">
    <text evidence="27">(Microbial infection) Cleaves and activates diphtheria toxin DT.</text>
</comment>
<comment type="function">
    <text evidence="8 10">(Microbial infection) Cleaves and activates anthrax toxin protective antigen (PA).</text>
</comment>
<comment type="function">
    <text evidence="19">(Microbial infection) Cleaves and activates HIV-1 virus Envelope glycoprotein gp160.</text>
</comment>
<comment type="function">
    <text evidence="17">(Microbial infection) Required for H7N1 and H5N1 influenza virus infection probably by cleaving hemagglutinin.</text>
</comment>
<comment type="function">
    <text evidence="18">(Microbial infection) Able to cleave S.pneumoniae serine-rich repeat protein PsrP.</text>
</comment>
<comment type="function">
    <text evidence="21 22">(Microbial infection) Facilitates human coronaviruses EMC and SARS-CoV-2 infections by proteolytically cleaving the spike protein at the monobasic S1/S2 cleavage site. This cleavage is essential for spike protein-mediated cell-cell fusion and entry into human lung cells.</text>
</comment>
<comment type="function">
    <text evidence="20">(Microbial infection) Facilitates mumps virus infection by proteolytically cleaving the viral fusion protein F.</text>
</comment>
<comment type="catalytic activity">
    <reaction evidence="7 8 9 10 11 14 16 17 19 21 22 24 25 26 27 29">
        <text>Release of mature proteins from their proproteins by cleavage of -Arg-Xaa-Yaa-Arg-|-Zaa- bonds, where Xaa can be any amino acid and Yaa is Arg or Lys. Releases albumin, complement component C3 and von Willebrand factor from their respective precursors.</text>
        <dbReference type="EC" id="3.4.21.75"/>
    </reaction>
</comment>
<comment type="cofactor">
    <cofactor evidence="10 16 17 29">
        <name>Ca(2+)</name>
        <dbReference type="ChEBI" id="CHEBI:29108"/>
    </cofactor>
    <text evidence="16 17 29">Binds 3 calcium ions per subunit.</text>
</comment>
<comment type="activity regulation">
    <text evidence="7 15 16 17 21 29">Inhibited by the not secondly cleaved propeptide (PubMed:11799113, PubMed:9130696). Inhibited by m-guanidinomethyl-phenylacetyl-Arg-Val-Arg-(amidomethyl)-benzamidine (m-guanidinomethyl-Phac-RVR-Amb) and 4-guanidinomethyl-phenylacetyl-Arg-Tle-Arg-4-amidinobenzylamide (MI-1148) (PubMed:24666235, PubMed:25974265). Inhibited by Decanoyl-Arg-Val-Lys-Arg-chloromethylketone (decanoyl-RVKR-CMK) (PubMed:32362314). Inhibited by heparin/heparan sulfate-binding (PubMed:2408021).</text>
</comment>
<comment type="biophysicochemical properties">
    <phDependence>
        <text evidence="29">Optimum pH is 6.0.</text>
    </phDependence>
</comment>
<comment type="subunit">
    <text evidence="1 6 20">Interacts with FLNA (By similarity). Binds to PACS1 which mediates TGN localization and connection to clathrin adapters (PubMed:11331585). Interacts with LAMP1, LAMP2 and LAMP3 (PubMed:32295904).</text>
</comment>
<comment type="interaction">
    <interactant intactId="EBI-1056807">
        <id>P09958</id>
    </interactant>
    <interactant intactId="EBI-77613">
        <id>P05067</id>
        <label>APP</label>
    </interactant>
    <organismsDiffer>false</organismsDiffer>
    <experiments>3</experiments>
</comment>
<comment type="interaction">
    <interactant intactId="EBI-1056807">
        <id>P09958</id>
    </interactant>
    <interactant intactId="EBI-992788">
        <id>P50281</id>
        <label>MMP14</label>
    </interactant>
    <organismsDiffer>false</organismsDiffer>
    <experiments>3</experiments>
</comment>
<comment type="interaction">
    <interactant intactId="EBI-1056807">
        <id>P09958</id>
    </interactant>
    <interactant intactId="EBI-20858485">
        <id>Q9H239</id>
        <label>MMP28</label>
    </interactant>
    <organismsDiffer>false</organismsDiffer>
    <experiments>3</experiments>
</comment>
<comment type="interaction">
    <interactant intactId="EBI-1056807">
        <id>P09958</id>
    </interactant>
    <interactant intactId="EBI-8542977">
        <id>O14793</id>
        <label>MSTN</label>
    </interactant>
    <organismsDiffer>false</organismsDiffer>
    <experiments>2</experiments>
</comment>
<comment type="interaction">
    <interactant intactId="EBI-1056807">
        <id>P09958</id>
    </interactant>
    <interactant intactId="EBI-25474996">
        <id>K9N5Q8</id>
        <label>S</label>
    </interactant>
    <organismsDiffer>true</organismsDiffer>
    <experiments>3</experiments>
</comment>
<comment type="interaction">
    <interactant intactId="EBI-1056807">
        <id>P09958</id>
    </interactant>
    <interactant intactId="EBI-25474821">
        <id>P0DTC2</id>
        <label>S</label>
    </interactant>
    <organismsDiffer>true</organismsDiffer>
    <experiments>5</experiments>
</comment>
<comment type="interaction">
    <interactant intactId="EBI-1056807">
        <id>P09958</id>
    </interactant>
    <interactant intactId="EBI-25690542">
        <id>Q91QT1</id>
        <label>s</label>
    </interactant>
    <organismsDiffer>true</organismsDiffer>
    <experiments>2</experiments>
</comment>
<comment type="subcellular location">
    <subcellularLocation>
        <location evidence="6 7 28 29 30">Golgi apparatus</location>
        <location evidence="6 7 28 29 30">trans-Golgi network membrane</location>
        <topology evidence="34">Single-pass type I membrane protein</topology>
    </subcellularLocation>
    <subcellularLocation>
        <location evidence="7 29 30">Cell membrane</location>
        <topology evidence="34">Single-pass type I membrane protein</topology>
    </subcellularLocation>
    <subcellularLocation>
        <location evidence="35">Secreted</location>
    </subcellularLocation>
    <subcellularLocation>
        <location evidence="30">Endosome membrane</location>
        <topology evidence="34">Single-pass type I membrane protein</topology>
    </subcellularLocation>
    <text evidence="7 30">Shuttles between the trans-Golgi network and the cell surface (PubMed:11799113, PubMed:9412467). Propeptide cleavage is a prerequisite for exit of furin molecules out of the endoplasmic reticulum (ER). A second cleavage within the propeptide occurs in the trans Golgi network (TGN), followed by the release of the propeptide and the activation of furin (PubMed:11799113).</text>
</comment>
<comment type="tissue specificity">
    <text evidence="11">Seems to be expressed ubiquitously.</text>
</comment>
<comment type="domain">
    <text evidence="28">Contains a cytoplasmic domain responsible for its TGN localization and recycling from the cell surface.</text>
</comment>
<comment type="PTM">
    <text evidence="9 29">The inhibition peptide, which plays the role of an intramolecular chaperone, is autocatalytically removed in the endoplasmic reticulum (ER) and remains non-covalently bound to furin as a potent autoinhibitor. Following transport to the trans Golgi, a second cleavage within the inhibition propeptide results in propeptide dissociation and furin activation.</text>
</comment>
<comment type="PTM">
    <text evidence="28">Phosphorylation is required for TGN localization of the endoprotease. In vivo, exists as di-, mono- and non-phosphorylated forms.</text>
</comment>
<comment type="similarity">
    <text evidence="34">Belongs to the peptidase S8 family. Furin subfamily.</text>
</comment>
<comment type="online information" name="Atlas of Genetics and Cytogenetics in Oncology and Haematology">
    <link uri="https://atlasgeneticsoncology.org/gene/40646/FURIN"/>
</comment>
<organism>
    <name type="scientific">Homo sapiens</name>
    <name type="common">Human</name>
    <dbReference type="NCBI Taxonomy" id="9606"/>
    <lineage>
        <taxon>Eukaryota</taxon>
        <taxon>Metazoa</taxon>
        <taxon>Chordata</taxon>
        <taxon>Craniata</taxon>
        <taxon>Vertebrata</taxon>
        <taxon>Euteleostomi</taxon>
        <taxon>Mammalia</taxon>
        <taxon>Eutheria</taxon>
        <taxon>Euarchontoglires</taxon>
        <taxon>Primates</taxon>
        <taxon>Haplorrhini</taxon>
        <taxon>Catarrhini</taxon>
        <taxon>Hominidae</taxon>
        <taxon>Homo</taxon>
    </lineage>
</organism>